<gene>
    <name evidence="1" type="primary">nuoB</name>
    <name type="ordered locus">YPTS_2681</name>
</gene>
<organism>
    <name type="scientific">Yersinia pseudotuberculosis serotype IB (strain PB1/+)</name>
    <dbReference type="NCBI Taxonomy" id="502801"/>
    <lineage>
        <taxon>Bacteria</taxon>
        <taxon>Pseudomonadati</taxon>
        <taxon>Pseudomonadota</taxon>
        <taxon>Gammaproteobacteria</taxon>
        <taxon>Enterobacterales</taxon>
        <taxon>Yersiniaceae</taxon>
        <taxon>Yersinia</taxon>
    </lineage>
</organism>
<reference key="1">
    <citation type="submission" date="2008-04" db="EMBL/GenBank/DDBJ databases">
        <title>Complete sequence of Yersinia pseudotuberculosis PB1/+.</title>
        <authorList>
            <person name="Copeland A."/>
            <person name="Lucas S."/>
            <person name="Lapidus A."/>
            <person name="Glavina del Rio T."/>
            <person name="Dalin E."/>
            <person name="Tice H."/>
            <person name="Bruce D."/>
            <person name="Goodwin L."/>
            <person name="Pitluck S."/>
            <person name="Munk A.C."/>
            <person name="Brettin T."/>
            <person name="Detter J.C."/>
            <person name="Han C."/>
            <person name="Tapia R."/>
            <person name="Schmutz J."/>
            <person name="Larimer F."/>
            <person name="Land M."/>
            <person name="Hauser L."/>
            <person name="Challacombe J.F."/>
            <person name="Green L."/>
            <person name="Lindler L.E."/>
            <person name="Nikolich M.P."/>
            <person name="Richardson P."/>
        </authorList>
    </citation>
    <scope>NUCLEOTIDE SEQUENCE [LARGE SCALE GENOMIC DNA]</scope>
    <source>
        <strain>PB1/+</strain>
    </source>
</reference>
<feature type="chain" id="PRO_0000376415" description="NADH-quinone oxidoreductase subunit B">
    <location>
        <begin position="1"/>
        <end position="225"/>
    </location>
</feature>
<feature type="binding site" evidence="1">
    <location>
        <position position="68"/>
    </location>
    <ligand>
        <name>[4Fe-4S] cluster</name>
        <dbReference type="ChEBI" id="CHEBI:49883"/>
    </ligand>
</feature>
<feature type="binding site" evidence="1">
    <location>
        <position position="69"/>
    </location>
    <ligand>
        <name>[4Fe-4S] cluster</name>
        <dbReference type="ChEBI" id="CHEBI:49883"/>
    </ligand>
</feature>
<feature type="binding site" evidence="1">
    <location>
        <position position="134"/>
    </location>
    <ligand>
        <name>[4Fe-4S] cluster</name>
        <dbReference type="ChEBI" id="CHEBI:49883"/>
    </ligand>
</feature>
<feature type="binding site" evidence="1">
    <location>
        <position position="163"/>
    </location>
    <ligand>
        <name>[4Fe-4S] cluster</name>
        <dbReference type="ChEBI" id="CHEBI:49883"/>
    </ligand>
</feature>
<protein>
    <recommendedName>
        <fullName evidence="1">NADH-quinone oxidoreductase subunit B</fullName>
        <ecNumber evidence="1">7.1.1.-</ecNumber>
    </recommendedName>
    <alternativeName>
        <fullName evidence="1">NADH dehydrogenase I subunit B</fullName>
    </alternativeName>
    <alternativeName>
        <fullName evidence="1">NDH-1 subunit B</fullName>
    </alternativeName>
</protein>
<comment type="function">
    <text evidence="1">NDH-1 shuttles electrons from NADH, via FMN and iron-sulfur (Fe-S) centers, to quinones in the respiratory chain. The immediate electron acceptor for the enzyme in this species is believed to be ubiquinone. Couples the redox reaction to proton translocation (for every two electrons transferred, four hydrogen ions are translocated across the cytoplasmic membrane), and thus conserves the redox energy in a proton gradient.</text>
</comment>
<comment type="catalytic activity">
    <reaction evidence="1">
        <text>a quinone + NADH + 5 H(+)(in) = a quinol + NAD(+) + 4 H(+)(out)</text>
        <dbReference type="Rhea" id="RHEA:57888"/>
        <dbReference type="ChEBI" id="CHEBI:15378"/>
        <dbReference type="ChEBI" id="CHEBI:24646"/>
        <dbReference type="ChEBI" id="CHEBI:57540"/>
        <dbReference type="ChEBI" id="CHEBI:57945"/>
        <dbReference type="ChEBI" id="CHEBI:132124"/>
    </reaction>
</comment>
<comment type="cofactor">
    <cofactor evidence="1">
        <name>[4Fe-4S] cluster</name>
        <dbReference type="ChEBI" id="CHEBI:49883"/>
    </cofactor>
    <text evidence="1">Binds 1 [4Fe-4S] cluster.</text>
</comment>
<comment type="subunit">
    <text evidence="1">NDH-1 is composed of 13 different subunits. Subunits NuoB, CD, E, F, and G constitute the peripheral sector of the complex.</text>
</comment>
<comment type="subcellular location">
    <subcellularLocation>
        <location evidence="1">Cell inner membrane</location>
        <topology evidence="1">Peripheral membrane protein</topology>
        <orientation evidence="1">Cytoplasmic side</orientation>
    </subcellularLocation>
</comment>
<comment type="similarity">
    <text evidence="1">Belongs to the complex I 20 kDa subunit family.</text>
</comment>
<proteinExistence type="inferred from homology"/>
<keyword id="KW-0004">4Fe-4S</keyword>
<keyword id="KW-0997">Cell inner membrane</keyword>
<keyword id="KW-1003">Cell membrane</keyword>
<keyword id="KW-0408">Iron</keyword>
<keyword id="KW-0411">Iron-sulfur</keyword>
<keyword id="KW-0472">Membrane</keyword>
<keyword id="KW-0479">Metal-binding</keyword>
<keyword id="KW-0520">NAD</keyword>
<keyword id="KW-0874">Quinone</keyword>
<keyword id="KW-1278">Translocase</keyword>
<keyword id="KW-0813">Transport</keyword>
<keyword id="KW-0830">Ubiquinone</keyword>
<accession>B2K820</accession>
<dbReference type="EC" id="7.1.1.-" evidence="1"/>
<dbReference type="EMBL" id="CP001048">
    <property type="protein sequence ID" value="ACC89641.1"/>
    <property type="molecule type" value="Genomic_DNA"/>
</dbReference>
<dbReference type="RefSeq" id="WP_002210278.1">
    <property type="nucleotide sequence ID" value="NZ_CP009780.1"/>
</dbReference>
<dbReference type="SMR" id="B2K820"/>
<dbReference type="KEGG" id="ypb:YPTS_2681"/>
<dbReference type="PATRIC" id="fig|502801.10.peg.2100"/>
<dbReference type="GO" id="GO:0005886">
    <property type="term" value="C:plasma membrane"/>
    <property type="evidence" value="ECO:0007669"/>
    <property type="project" value="UniProtKB-SubCell"/>
</dbReference>
<dbReference type="GO" id="GO:0045271">
    <property type="term" value="C:respiratory chain complex I"/>
    <property type="evidence" value="ECO:0007669"/>
    <property type="project" value="TreeGrafter"/>
</dbReference>
<dbReference type="GO" id="GO:0051539">
    <property type="term" value="F:4 iron, 4 sulfur cluster binding"/>
    <property type="evidence" value="ECO:0007669"/>
    <property type="project" value="UniProtKB-KW"/>
</dbReference>
<dbReference type="GO" id="GO:0005506">
    <property type="term" value="F:iron ion binding"/>
    <property type="evidence" value="ECO:0007669"/>
    <property type="project" value="UniProtKB-UniRule"/>
</dbReference>
<dbReference type="GO" id="GO:0008137">
    <property type="term" value="F:NADH dehydrogenase (ubiquinone) activity"/>
    <property type="evidence" value="ECO:0007669"/>
    <property type="project" value="InterPro"/>
</dbReference>
<dbReference type="GO" id="GO:0050136">
    <property type="term" value="F:NADH:ubiquinone reductase (non-electrogenic) activity"/>
    <property type="evidence" value="ECO:0007669"/>
    <property type="project" value="UniProtKB-UniRule"/>
</dbReference>
<dbReference type="GO" id="GO:0048038">
    <property type="term" value="F:quinone binding"/>
    <property type="evidence" value="ECO:0007669"/>
    <property type="project" value="UniProtKB-KW"/>
</dbReference>
<dbReference type="GO" id="GO:0009060">
    <property type="term" value="P:aerobic respiration"/>
    <property type="evidence" value="ECO:0007669"/>
    <property type="project" value="TreeGrafter"/>
</dbReference>
<dbReference type="GO" id="GO:0015990">
    <property type="term" value="P:electron transport coupled proton transport"/>
    <property type="evidence" value="ECO:0007669"/>
    <property type="project" value="TreeGrafter"/>
</dbReference>
<dbReference type="FunFam" id="3.40.50.12280:FF:000002">
    <property type="entry name" value="NADH-quinone oxidoreductase subunit B"/>
    <property type="match status" value="1"/>
</dbReference>
<dbReference type="Gene3D" id="3.40.50.12280">
    <property type="match status" value="1"/>
</dbReference>
<dbReference type="HAMAP" id="MF_01356">
    <property type="entry name" value="NDH1_NuoB"/>
    <property type="match status" value="1"/>
</dbReference>
<dbReference type="InterPro" id="IPR006137">
    <property type="entry name" value="NADH_UbQ_OxRdtase-like_20kDa"/>
</dbReference>
<dbReference type="InterPro" id="IPR006138">
    <property type="entry name" value="NADH_UQ_OxRdtase_20Kd_su"/>
</dbReference>
<dbReference type="NCBIfam" id="TIGR01957">
    <property type="entry name" value="nuoB_fam"/>
    <property type="match status" value="1"/>
</dbReference>
<dbReference type="NCBIfam" id="NF005012">
    <property type="entry name" value="PRK06411.1"/>
    <property type="match status" value="1"/>
</dbReference>
<dbReference type="PANTHER" id="PTHR11995">
    <property type="entry name" value="NADH DEHYDROGENASE"/>
    <property type="match status" value="1"/>
</dbReference>
<dbReference type="PANTHER" id="PTHR11995:SF14">
    <property type="entry name" value="NADH DEHYDROGENASE [UBIQUINONE] IRON-SULFUR PROTEIN 7, MITOCHONDRIAL"/>
    <property type="match status" value="1"/>
</dbReference>
<dbReference type="Pfam" id="PF01058">
    <property type="entry name" value="Oxidored_q6"/>
    <property type="match status" value="1"/>
</dbReference>
<dbReference type="SUPFAM" id="SSF56770">
    <property type="entry name" value="HydA/Nqo6-like"/>
    <property type="match status" value="1"/>
</dbReference>
<dbReference type="PROSITE" id="PS01150">
    <property type="entry name" value="COMPLEX1_20K"/>
    <property type="match status" value="1"/>
</dbReference>
<sequence length="225" mass="25611">MDYTLTRIDPNGENDRYPLQTQETVSGDPLEQHVHRSVYMGKLENAMHDMVNWGRKNSLWPYNFGLSCCYVEMVTSFTAVHDVARFGAEVLRASPRQADFMVVAGTCFTKMAPVIQRLYEQMLEPKWVISMGACANSGGMYDIYSVVQGVDKFLPVDVYIPGCPPRPEAYMQALLLLQESIGKERRPLSWVVGDQGVYRANMQPERERKHAERIAVTNLRTPDEI</sequence>
<name>NUOB_YERPB</name>
<evidence type="ECO:0000255" key="1">
    <source>
        <dbReference type="HAMAP-Rule" id="MF_01356"/>
    </source>
</evidence>